<dbReference type="EC" id="4.2.1.20" evidence="1"/>
<dbReference type="EMBL" id="BX640421">
    <property type="protein sequence ID" value="CAE43848.1"/>
    <property type="molecule type" value="Genomic_DNA"/>
</dbReference>
<dbReference type="RefSeq" id="NP_882102.1">
    <property type="nucleotide sequence ID" value="NC_002929.2"/>
</dbReference>
<dbReference type="RefSeq" id="WP_010931555.1">
    <property type="nucleotide sequence ID" value="NZ_CP039022.1"/>
</dbReference>
<dbReference type="SMR" id="Q7VTF1"/>
<dbReference type="STRING" id="257313.BP3589"/>
<dbReference type="PaxDb" id="257313-BP3589"/>
<dbReference type="GeneID" id="69600413"/>
<dbReference type="KEGG" id="bpe:BP3589"/>
<dbReference type="PATRIC" id="fig|257313.5.peg.3883"/>
<dbReference type="eggNOG" id="COG0133">
    <property type="taxonomic scope" value="Bacteria"/>
</dbReference>
<dbReference type="HOGENOM" id="CLU_016734_3_1_4"/>
<dbReference type="UniPathway" id="UPA00035">
    <property type="reaction ID" value="UER00044"/>
</dbReference>
<dbReference type="Proteomes" id="UP000002676">
    <property type="component" value="Chromosome"/>
</dbReference>
<dbReference type="GO" id="GO:0005737">
    <property type="term" value="C:cytoplasm"/>
    <property type="evidence" value="ECO:0007669"/>
    <property type="project" value="TreeGrafter"/>
</dbReference>
<dbReference type="GO" id="GO:0004834">
    <property type="term" value="F:tryptophan synthase activity"/>
    <property type="evidence" value="ECO:0007669"/>
    <property type="project" value="UniProtKB-UniRule"/>
</dbReference>
<dbReference type="CDD" id="cd06446">
    <property type="entry name" value="Trp-synth_B"/>
    <property type="match status" value="1"/>
</dbReference>
<dbReference type="FunFam" id="3.40.50.1100:FF:000001">
    <property type="entry name" value="Tryptophan synthase beta chain"/>
    <property type="match status" value="1"/>
</dbReference>
<dbReference type="FunFam" id="3.40.50.1100:FF:000004">
    <property type="entry name" value="Tryptophan synthase beta chain"/>
    <property type="match status" value="1"/>
</dbReference>
<dbReference type="Gene3D" id="3.40.50.1100">
    <property type="match status" value="2"/>
</dbReference>
<dbReference type="HAMAP" id="MF_00133">
    <property type="entry name" value="Trp_synth_beta"/>
    <property type="match status" value="1"/>
</dbReference>
<dbReference type="InterPro" id="IPR006653">
    <property type="entry name" value="Trp_synth_b_CS"/>
</dbReference>
<dbReference type="InterPro" id="IPR006654">
    <property type="entry name" value="Trp_synth_beta"/>
</dbReference>
<dbReference type="InterPro" id="IPR023026">
    <property type="entry name" value="Trp_synth_beta/beta-like"/>
</dbReference>
<dbReference type="InterPro" id="IPR001926">
    <property type="entry name" value="TrpB-like_PALP"/>
</dbReference>
<dbReference type="InterPro" id="IPR036052">
    <property type="entry name" value="TrpB-like_PALP_sf"/>
</dbReference>
<dbReference type="NCBIfam" id="TIGR00263">
    <property type="entry name" value="trpB"/>
    <property type="match status" value="1"/>
</dbReference>
<dbReference type="PANTHER" id="PTHR48077:SF3">
    <property type="entry name" value="TRYPTOPHAN SYNTHASE"/>
    <property type="match status" value="1"/>
</dbReference>
<dbReference type="PANTHER" id="PTHR48077">
    <property type="entry name" value="TRYPTOPHAN SYNTHASE-RELATED"/>
    <property type="match status" value="1"/>
</dbReference>
<dbReference type="Pfam" id="PF00291">
    <property type="entry name" value="PALP"/>
    <property type="match status" value="1"/>
</dbReference>
<dbReference type="PIRSF" id="PIRSF001413">
    <property type="entry name" value="Trp_syn_beta"/>
    <property type="match status" value="1"/>
</dbReference>
<dbReference type="SUPFAM" id="SSF53686">
    <property type="entry name" value="Tryptophan synthase beta subunit-like PLP-dependent enzymes"/>
    <property type="match status" value="1"/>
</dbReference>
<dbReference type="PROSITE" id="PS00168">
    <property type="entry name" value="TRP_SYNTHASE_BETA"/>
    <property type="match status" value="1"/>
</dbReference>
<feature type="chain" id="PRO_0000098922" description="Tryptophan synthase beta chain">
    <location>
        <begin position="1"/>
        <end position="399"/>
    </location>
</feature>
<feature type="modified residue" description="N6-(pyridoxal phosphate)lysine" evidence="1">
    <location>
        <position position="92"/>
    </location>
</feature>
<accession>Q7VTF1</accession>
<protein>
    <recommendedName>
        <fullName evidence="1">Tryptophan synthase beta chain</fullName>
        <ecNumber evidence="1">4.2.1.20</ecNumber>
    </recommendedName>
</protein>
<keyword id="KW-0028">Amino-acid biosynthesis</keyword>
<keyword id="KW-0057">Aromatic amino acid biosynthesis</keyword>
<keyword id="KW-0456">Lyase</keyword>
<keyword id="KW-0663">Pyridoxal phosphate</keyword>
<keyword id="KW-1185">Reference proteome</keyword>
<keyword id="KW-0822">Tryptophan biosynthesis</keyword>
<organism>
    <name type="scientific">Bordetella pertussis (strain Tohama I / ATCC BAA-589 / NCTC 13251)</name>
    <dbReference type="NCBI Taxonomy" id="257313"/>
    <lineage>
        <taxon>Bacteria</taxon>
        <taxon>Pseudomonadati</taxon>
        <taxon>Pseudomonadota</taxon>
        <taxon>Betaproteobacteria</taxon>
        <taxon>Burkholderiales</taxon>
        <taxon>Alcaligenaceae</taxon>
        <taxon>Bordetella</taxon>
    </lineage>
</organism>
<name>TRPB_BORPE</name>
<proteinExistence type="inferred from homology"/>
<sequence>MKPYDLPDARGHFGPYGGVFVAETLMHALDELRAAYDQCRVDPSFIDEFNYELKHFVGRPSPVYHASRWSQRLGGAQIWFKREDLNHTGAHKVNNCIGQALLARRMGKPRVIAETGAGQHGVATATVAARYGMECVVFMGSEDVRRQASNVYRMKLLGATVVPVDSGSCTLKDALNEAMRDWVTNIENTFYIIGTVAGPDPYPRMVRDFQTVIGQECLTQMPEVIGRQPDYVVAAVGGGSNAMGIFHPYIPYENVRLIGVEAAGEGMETGRHAASLAAGQIGVLHGNRTYVMQNADGQVQETHSVSAGLDYPGVGPEHAWLKDSGRAEYAGITDDEALAAFHDCCRIEGIMPALESAHAIAQAVKMTPALSKDKVILVNLSGRGDKDMHTVAERAGLQL</sequence>
<gene>
    <name evidence="1" type="primary">trpB</name>
    <name type="ordered locus">BP3589</name>
</gene>
<comment type="function">
    <text evidence="1">The beta subunit is responsible for the synthesis of L-tryptophan from indole and L-serine.</text>
</comment>
<comment type="catalytic activity">
    <reaction evidence="1">
        <text>(1S,2R)-1-C-(indol-3-yl)glycerol 3-phosphate + L-serine = D-glyceraldehyde 3-phosphate + L-tryptophan + H2O</text>
        <dbReference type="Rhea" id="RHEA:10532"/>
        <dbReference type="ChEBI" id="CHEBI:15377"/>
        <dbReference type="ChEBI" id="CHEBI:33384"/>
        <dbReference type="ChEBI" id="CHEBI:57912"/>
        <dbReference type="ChEBI" id="CHEBI:58866"/>
        <dbReference type="ChEBI" id="CHEBI:59776"/>
        <dbReference type="EC" id="4.2.1.20"/>
    </reaction>
</comment>
<comment type="cofactor">
    <cofactor evidence="1">
        <name>pyridoxal 5'-phosphate</name>
        <dbReference type="ChEBI" id="CHEBI:597326"/>
    </cofactor>
</comment>
<comment type="pathway">
    <text evidence="1">Amino-acid biosynthesis; L-tryptophan biosynthesis; L-tryptophan from chorismate: step 5/5.</text>
</comment>
<comment type="subunit">
    <text evidence="1">Tetramer of two alpha and two beta chains.</text>
</comment>
<comment type="similarity">
    <text evidence="1">Belongs to the TrpB family.</text>
</comment>
<evidence type="ECO:0000255" key="1">
    <source>
        <dbReference type="HAMAP-Rule" id="MF_00133"/>
    </source>
</evidence>
<reference key="1">
    <citation type="journal article" date="2003" name="Nat. Genet.">
        <title>Comparative analysis of the genome sequences of Bordetella pertussis, Bordetella parapertussis and Bordetella bronchiseptica.</title>
        <authorList>
            <person name="Parkhill J."/>
            <person name="Sebaihia M."/>
            <person name="Preston A."/>
            <person name="Murphy L.D."/>
            <person name="Thomson N.R."/>
            <person name="Harris D.E."/>
            <person name="Holden M.T.G."/>
            <person name="Churcher C.M."/>
            <person name="Bentley S.D."/>
            <person name="Mungall K.L."/>
            <person name="Cerdeno-Tarraga A.-M."/>
            <person name="Temple L."/>
            <person name="James K.D."/>
            <person name="Harris B."/>
            <person name="Quail M.A."/>
            <person name="Achtman M."/>
            <person name="Atkin R."/>
            <person name="Baker S."/>
            <person name="Basham D."/>
            <person name="Bason N."/>
            <person name="Cherevach I."/>
            <person name="Chillingworth T."/>
            <person name="Collins M."/>
            <person name="Cronin A."/>
            <person name="Davis P."/>
            <person name="Doggett J."/>
            <person name="Feltwell T."/>
            <person name="Goble A."/>
            <person name="Hamlin N."/>
            <person name="Hauser H."/>
            <person name="Holroyd S."/>
            <person name="Jagels K."/>
            <person name="Leather S."/>
            <person name="Moule S."/>
            <person name="Norberczak H."/>
            <person name="O'Neil S."/>
            <person name="Ormond D."/>
            <person name="Price C."/>
            <person name="Rabbinowitsch E."/>
            <person name="Rutter S."/>
            <person name="Sanders M."/>
            <person name="Saunders D."/>
            <person name="Seeger K."/>
            <person name="Sharp S."/>
            <person name="Simmonds M."/>
            <person name="Skelton J."/>
            <person name="Squares R."/>
            <person name="Squares S."/>
            <person name="Stevens K."/>
            <person name="Unwin L."/>
            <person name="Whitehead S."/>
            <person name="Barrell B.G."/>
            <person name="Maskell D.J."/>
        </authorList>
    </citation>
    <scope>NUCLEOTIDE SEQUENCE [LARGE SCALE GENOMIC DNA]</scope>
    <source>
        <strain>Tohama I / ATCC BAA-589 / NCTC 13251</strain>
    </source>
</reference>